<proteinExistence type="inferred from homology"/>
<gene>
    <name type="ordered locus">MT0822</name>
</gene>
<sequence length="218" mass="24983">MSRHWPLFDLRITTPRLQLQLPTEELCDQLIDTILEGVHDPDRMPFSVPWTRASREDLPFNTLSHLWQQLAGFKRDDWSLPLAVLVDGRAVGVQALSSKDFPITRQVDSGSWLGLRYQGHGYGTEMRAAVLYFAFAELEAQVATSRSFVDNPASIAVSRRNGYRDNGLDRVAREGAMAEALLFRLTRDDWQRHRTVEVRVDGFDRCRPLFGPLEPPRY</sequence>
<feature type="chain" id="PRO_0000426778" description="Acetyl- and succinyl-CoA transferase MT0822">
    <location>
        <begin position="1"/>
        <end position="218"/>
    </location>
</feature>
<feature type="domain" description="N-acetyltransferase" evidence="3">
    <location>
        <begin position="32"/>
        <end position="188"/>
    </location>
</feature>
<feature type="binding site" evidence="2">
    <location>
        <position position="94"/>
    </location>
    <ligand>
        <name>substrate</name>
    </ligand>
</feature>
<feature type="binding site" evidence="2">
    <location>
        <begin position="109"/>
        <end position="113"/>
    </location>
    <ligand>
        <name>substrate</name>
    </ligand>
</feature>
<feature type="binding site" evidence="2">
    <location>
        <begin position="119"/>
        <end position="124"/>
    </location>
    <ligand>
        <name>substrate</name>
    </ligand>
</feature>
<feature type="binding site" evidence="2">
    <location>
        <begin position="145"/>
        <end position="151"/>
    </location>
    <ligand>
        <name>substrate</name>
    </ligand>
</feature>
<feature type="binding site" evidence="2">
    <location>
        <position position="160"/>
    </location>
    <ligand>
        <name>substrate</name>
    </ligand>
</feature>
<dbReference type="EC" id="2.8.1.-" evidence="1"/>
<dbReference type="EMBL" id="AE000516">
    <property type="protein sequence ID" value="AAK45064.1"/>
    <property type="molecule type" value="Genomic_DNA"/>
</dbReference>
<dbReference type="PIR" id="C70536">
    <property type="entry name" value="C70536"/>
</dbReference>
<dbReference type="RefSeq" id="WP_003404111.1">
    <property type="nucleotide sequence ID" value="NZ_KK341227.1"/>
</dbReference>
<dbReference type="SMR" id="P9WQG6"/>
<dbReference type="KEGG" id="mtc:MT0822"/>
<dbReference type="PATRIC" id="fig|83331.31.peg.884"/>
<dbReference type="HOGENOM" id="CLU_106319_1_0_11"/>
<dbReference type="Proteomes" id="UP000001020">
    <property type="component" value="Chromosome"/>
</dbReference>
<dbReference type="GO" id="GO:0005737">
    <property type="term" value="C:cytoplasm"/>
    <property type="evidence" value="ECO:0007669"/>
    <property type="project" value="TreeGrafter"/>
</dbReference>
<dbReference type="GO" id="GO:1990189">
    <property type="term" value="F:protein N-terminal-serine acetyltransferase activity"/>
    <property type="evidence" value="ECO:0007669"/>
    <property type="project" value="TreeGrafter"/>
</dbReference>
<dbReference type="GO" id="GO:0061733">
    <property type="term" value="F:protein-lysine-acetyltransferase activity"/>
    <property type="evidence" value="ECO:0007669"/>
    <property type="project" value="RHEA"/>
</dbReference>
<dbReference type="GO" id="GO:0008999">
    <property type="term" value="F:protein-N-terminal-alanine acetyltransferase activity"/>
    <property type="evidence" value="ECO:0007669"/>
    <property type="project" value="TreeGrafter"/>
</dbReference>
<dbReference type="FunFam" id="3.40.630.30:FF:000176">
    <property type="entry name" value="Putative succinyl-CoA transferase Rv0802c"/>
    <property type="match status" value="1"/>
</dbReference>
<dbReference type="Gene3D" id="3.40.630.30">
    <property type="match status" value="1"/>
</dbReference>
<dbReference type="InterPro" id="IPR016181">
    <property type="entry name" value="Acyl_CoA_acyltransferase"/>
</dbReference>
<dbReference type="InterPro" id="IPR000182">
    <property type="entry name" value="GNAT_dom"/>
</dbReference>
<dbReference type="InterPro" id="IPR051908">
    <property type="entry name" value="Ribosomal_N-acetyltransferase"/>
</dbReference>
<dbReference type="PANTHER" id="PTHR43441">
    <property type="entry name" value="RIBOSOMAL-PROTEIN-SERINE ACETYLTRANSFERASE"/>
    <property type="match status" value="1"/>
</dbReference>
<dbReference type="PANTHER" id="PTHR43441:SF11">
    <property type="entry name" value="RIBOSOMAL-PROTEIN-SERINE ACETYLTRANSFERASE"/>
    <property type="match status" value="1"/>
</dbReference>
<dbReference type="Pfam" id="PF13302">
    <property type="entry name" value="Acetyltransf_3"/>
    <property type="match status" value="1"/>
</dbReference>
<dbReference type="SUPFAM" id="SSF55729">
    <property type="entry name" value="Acyl-CoA N-acyltransferases (Nat)"/>
    <property type="match status" value="1"/>
</dbReference>
<dbReference type="PROSITE" id="PS51186">
    <property type="entry name" value="GNAT"/>
    <property type="match status" value="1"/>
</dbReference>
<accession>P9WQG6</accession>
<accession>L0T4S8</accession>
<accession>O06632</accession>
<accession>Q7D995</accession>
<protein>
    <recommendedName>
        <fullName evidence="1">Acetyl- and succinyl-CoA transferase MT0822</fullName>
        <ecNumber evidence="1">2.8.1.-</ecNumber>
    </recommendedName>
</protein>
<evidence type="ECO:0000250" key="1">
    <source>
        <dbReference type="UniProtKB" id="A5U0J1"/>
    </source>
</evidence>
<evidence type="ECO:0000250" key="2">
    <source>
        <dbReference type="UniProtKB" id="P9WQG7"/>
    </source>
</evidence>
<evidence type="ECO:0000255" key="3">
    <source>
        <dbReference type="PROSITE-ProRule" id="PRU00532"/>
    </source>
</evidence>
<reference key="1">
    <citation type="journal article" date="2002" name="J. Bacteriol.">
        <title>Whole-genome comparison of Mycobacterium tuberculosis clinical and laboratory strains.</title>
        <authorList>
            <person name="Fleischmann R.D."/>
            <person name="Alland D."/>
            <person name="Eisen J.A."/>
            <person name="Carpenter L."/>
            <person name="White O."/>
            <person name="Peterson J.D."/>
            <person name="DeBoy R.T."/>
            <person name="Dodson R.J."/>
            <person name="Gwinn M.L."/>
            <person name="Haft D.H."/>
            <person name="Hickey E.K."/>
            <person name="Kolonay J.F."/>
            <person name="Nelson W.C."/>
            <person name="Umayam L.A."/>
            <person name="Ermolaeva M.D."/>
            <person name="Salzberg S.L."/>
            <person name="Delcher A."/>
            <person name="Utterback T.R."/>
            <person name="Weidman J.F."/>
            <person name="Khouri H.M."/>
            <person name="Gill J."/>
            <person name="Mikula A."/>
            <person name="Bishai W."/>
            <person name="Jacobs W.R. Jr."/>
            <person name="Venter J.C."/>
            <person name="Fraser C.M."/>
        </authorList>
    </citation>
    <scope>NUCLEOTIDE SEQUENCE [LARGE SCALE GENOMIC DNA]</scope>
    <source>
        <strain>CDC 1551 / Oshkosh</strain>
    </source>
</reference>
<keyword id="KW-0012">Acyltransferase</keyword>
<keyword id="KW-1185">Reference proteome</keyword>
<keyword id="KW-0808">Transferase</keyword>
<comment type="function">
    <text evidence="1">Acetylates and succinylates nucleoid-associated, DNA-binding protein HupB.</text>
</comment>
<comment type="catalytic activity">
    <reaction evidence="1">
        <text>L-lysyl-[protein] + acetyl-CoA = N(6)-acetyl-L-lysyl-[protein] + CoA + H(+)</text>
        <dbReference type="Rhea" id="RHEA:45948"/>
        <dbReference type="Rhea" id="RHEA-COMP:9752"/>
        <dbReference type="Rhea" id="RHEA-COMP:10731"/>
        <dbReference type="ChEBI" id="CHEBI:15378"/>
        <dbReference type="ChEBI" id="CHEBI:29969"/>
        <dbReference type="ChEBI" id="CHEBI:57287"/>
        <dbReference type="ChEBI" id="CHEBI:57288"/>
        <dbReference type="ChEBI" id="CHEBI:61930"/>
    </reaction>
</comment>
<comment type="catalytic activity">
    <reaction evidence="1">
        <text>succinyl-CoA + L-lysyl-[protein] = N(6)-succinyl-L-lysyl-[protein] + CoA + H(+)</text>
        <dbReference type="Rhea" id="RHEA:16261"/>
        <dbReference type="Rhea" id="RHEA-COMP:9752"/>
        <dbReference type="Rhea" id="RHEA-COMP:11877"/>
        <dbReference type="ChEBI" id="CHEBI:15378"/>
        <dbReference type="ChEBI" id="CHEBI:29969"/>
        <dbReference type="ChEBI" id="CHEBI:57287"/>
        <dbReference type="ChEBI" id="CHEBI:57292"/>
        <dbReference type="ChEBI" id="CHEBI:87830"/>
    </reaction>
</comment>
<comment type="subunit">
    <text evidence="2">Dimer of dimers.</text>
</comment>
<name>Y802_MYCTO</name>
<organism>
    <name type="scientific">Mycobacterium tuberculosis (strain CDC 1551 / Oshkosh)</name>
    <dbReference type="NCBI Taxonomy" id="83331"/>
    <lineage>
        <taxon>Bacteria</taxon>
        <taxon>Bacillati</taxon>
        <taxon>Actinomycetota</taxon>
        <taxon>Actinomycetes</taxon>
        <taxon>Mycobacteriales</taxon>
        <taxon>Mycobacteriaceae</taxon>
        <taxon>Mycobacterium</taxon>
        <taxon>Mycobacterium tuberculosis complex</taxon>
    </lineage>
</organism>